<reference key="1">
    <citation type="journal article" date="2005" name="Nucleic Acids Res.">
        <title>Genome dynamics and diversity of Shigella species, the etiologic agents of bacillary dysentery.</title>
        <authorList>
            <person name="Yang F."/>
            <person name="Yang J."/>
            <person name="Zhang X."/>
            <person name="Chen L."/>
            <person name="Jiang Y."/>
            <person name="Yan Y."/>
            <person name="Tang X."/>
            <person name="Wang J."/>
            <person name="Xiong Z."/>
            <person name="Dong J."/>
            <person name="Xue Y."/>
            <person name="Zhu Y."/>
            <person name="Xu X."/>
            <person name="Sun L."/>
            <person name="Chen S."/>
            <person name="Nie H."/>
            <person name="Peng J."/>
            <person name="Xu J."/>
            <person name="Wang Y."/>
            <person name="Yuan Z."/>
            <person name="Wen Y."/>
            <person name="Yao Z."/>
            <person name="Shen Y."/>
            <person name="Qiang B."/>
            <person name="Hou Y."/>
            <person name="Yu J."/>
            <person name="Jin Q."/>
        </authorList>
    </citation>
    <scope>NUCLEOTIDE SEQUENCE [LARGE SCALE GENOMIC DNA]</scope>
    <source>
        <strain>Ss046</strain>
    </source>
</reference>
<keyword id="KW-0223">Dioxygenase</keyword>
<keyword id="KW-0408">Iron</keyword>
<keyword id="KW-0479">Metal-binding</keyword>
<keyword id="KW-0560">Oxidoreductase</keyword>
<keyword id="KW-1185">Reference proteome</keyword>
<keyword id="KW-0847">Vitamin C</keyword>
<dbReference type="EC" id="1.14.11.-" evidence="1"/>
<dbReference type="EMBL" id="CP000038">
    <property type="protein sequence ID" value="AAZ87531.1"/>
    <property type="status" value="ALT_INIT"/>
    <property type="molecule type" value="Genomic_DNA"/>
</dbReference>
<dbReference type="RefSeq" id="WP_000990181.1">
    <property type="nucleotide sequence ID" value="NC_007384.1"/>
</dbReference>
<dbReference type="SMR" id="Q3Z3Y1"/>
<dbReference type="GeneID" id="93776626"/>
<dbReference type="KEGG" id="ssn:SSON_0783"/>
<dbReference type="HOGENOM" id="CLU_106663_0_0_6"/>
<dbReference type="Proteomes" id="UP000002529">
    <property type="component" value="Chromosome"/>
</dbReference>
<dbReference type="GO" id="GO:0016706">
    <property type="term" value="F:2-oxoglutarate-dependent dioxygenase activity"/>
    <property type="evidence" value="ECO:0007669"/>
    <property type="project" value="UniProtKB-UniRule"/>
</dbReference>
<dbReference type="GO" id="GO:0005506">
    <property type="term" value="F:iron ion binding"/>
    <property type="evidence" value="ECO:0007669"/>
    <property type="project" value="UniProtKB-UniRule"/>
</dbReference>
<dbReference type="GO" id="GO:0031418">
    <property type="term" value="F:L-ascorbic acid binding"/>
    <property type="evidence" value="ECO:0007669"/>
    <property type="project" value="UniProtKB-KW"/>
</dbReference>
<dbReference type="GO" id="GO:0006974">
    <property type="term" value="P:DNA damage response"/>
    <property type="evidence" value="ECO:0007669"/>
    <property type="project" value="TreeGrafter"/>
</dbReference>
<dbReference type="GO" id="GO:0006879">
    <property type="term" value="P:intracellular iron ion homeostasis"/>
    <property type="evidence" value="ECO:0007669"/>
    <property type="project" value="TreeGrafter"/>
</dbReference>
<dbReference type="FunFam" id="2.60.120.620:FF:000006">
    <property type="entry name" value="PKHD-type hydroxylase YbiX"/>
    <property type="match status" value="1"/>
</dbReference>
<dbReference type="FunFam" id="4.10.860.20:FF:000001">
    <property type="entry name" value="PKHD-type hydroxylase YbiX"/>
    <property type="match status" value="1"/>
</dbReference>
<dbReference type="Gene3D" id="2.60.120.620">
    <property type="entry name" value="q2cbj1_9rhob like domain"/>
    <property type="match status" value="1"/>
</dbReference>
<dbReference type="Gene3D" id="4.10.860.20">
    <property type="entry name" value="Rabenosyn, Rab binding domain"/>
    <property type="match status" value="1"/>
</dbReference>
<dbReference type="HAMAP" id="MF_00657">
    <property type="entry name" value="Hydroxyl_YbiX"/>
    <property type="match status" value="1"/>
</dbReference>
<dbReference type="InterPro" id="IPR005123">
    <property type="entry name" value="Oxoglu/Fe-dep_dioxygenase_dom"/>
</dbReference>
<dbReference type="InterPro" id="IPR041097">
    <property type="entry name" value="PKHD_C"/>
</dbReference>
<dbReference type="InterPro" id="IPR023550">
    <property type="entry name" value="PKHD_hydroxylase"/>
</dbReference>
<dbReference type="InterPro" id="IPR006620">
    <property type="entry name" value="Pro_4_hyd_alph"/>
</dbReference>
<dbReference type="InterPro" id="IPR044862">
    <property type="entry name" value="Pro_4_hyd_alph_FE2OG_OXY"/>
</dbReference>
<dbReference type="NCBIfam" id="NF003972">
    <property type="entry name" value="PRK05467.1-1"/>
    <property type="match status" value="1"/>
</dbReference>
<dbReference type="NCBIfam" id="NF003974">
    <property type="entry name" value="PRK05467.1-3"/>
    <property type="match status" value="1"/>
</dbReference>
<dbReference type="NCBIfam" id="NF003975">
    <property type="entry name" value="PRK05467.1-4"/>
    <property type="match status" value="1"/>
</dbReference>
<dbReference type="PANTHER" id="PTHR41536">
    <property type="entry name" value="PKHD-TYPE HYDROXYLASE YBIX"/>
    <property type="match status" value="1"/>
</dbReference>
<dbReference type="PANTHER" id="PTHR41536:SF1">
    <property type="entry name" value="PKHD-TYPE HYDROXYLASE YBIX"/>
    <property type="match status" value="1"/>
</dbReference>
<dbReference type="Pfam" id="PF13640">
    <property type="entry name" value="2OG-FeII_Oxy_3"/>
    <property type="match status" value="1"/>
</dbReference>
<dbReference type="Pfam" id="PF18331">
    <property type="entry name" value="PKHD_C"/>
    <property type="match status" value="1"/>
</dbReference>
<dbReference type="SMART" id="SM00702">
    <property type="entry name" value="P4Hc"/>
    <property type="match status" value="1"/>
</dbReference>
<dbReference type="SUPFAM" id="SSF51197">
    <property type="entry name" value="Clavaminate synthase-like"/>
    <property type="match status" value="1"/>
</dbReference>
<dbReference type="PROSITE" id="PS51471">
    <property type="entry name" value="FE2OG_OXY"/>
    <property type="match status" value="1"/>
</dbReference>
<evidence type="ECO:0000255" key="1">
    <source>
        <dbReference type="HAMAP-Rule" id="MF_00657"/>
    </source>
</evidence>
<evidence type="ECO:0000305" key="2"/>
<accession>Q3Z3Y1</accession>
<gene>
    <name evidence="1" type="primary">ybiX</name>
    <name type="ordered locus">SSON_0783</name>
</gene>
<name>YBIX_SHISS</name>
<proteinExistence type="inferred from homology"/>
<feature type="chain" id="PRO_0000346522" description="PKHD-type hydroxylase YbiX">
    <location>
        <begin position="1"/>
        <end position="225"/>
    </location>
</feature>
<feature type="domain" description="Fe2OG dioxygenase" evidence="1">
    <location>
        <begin position="78"/>
        <end position="177"/>
    </location>
</feature>
<feature type="binding site" evidence="1">
    <location>
        <position position="96"/>
    </location>
    <ligand>
        <name>Fe cation</name>
        <dbReference type="ChEBI" id="CHEBI:24875"/>
    </ligand>
</feature>
<feature type="binding site" evidence="1">
    <location>
        <position position="98"/>
    </location>
    <ligand>
        <name>Fe cation</name>
        <dbReference type="ChEBI" id="CHEBI:24875"/>
    </ligand>
</feature>
<feature type="binding site" evidence="1">
    <location>
        <position position="158"/>
    </location>
    <ligand>
        <name>Fe cation</name>
        <dbReference type="ChEBI" id="CHEBI:24875"/>
    </ligand>
</feature>
<feature type="binding site" evidence="1">
    <location>
        <position position="168"/>
    </location>
    <ligand>
        <name>2-oxoglutarate</name>
        <dbReference type="ChEBI" id="CHEBI:16810"/>
    </ligand>
</feature>
<comment type="cofactor">
    <cofactor evidence="1">
        <name>Fe(2+)</name>
        <dbReference type="ChEBI" id="CHEBI:29033"/>
    </cofactor>
    <text evidence="1">Binds 1 Fe(2+) ion per subunit.</text>
</comment>
<comment type="cofactor">
    <cofactor evidence="1">
        <name>L-ascorbate</name>
        <dbReference type="ChEBI" id="CHEBI:38290"/>
    </cofactor>
</comment>
<comment type="sequence caution" evidence="2">
    <conflict type="erroneous initiation">
        <sequence resource="EMBL-CDS" id="AAZ87531"/>
    </conflict>
</comment>
<organism>
    <name type="scientific">Shigella sonnei (strain Ss046)</name>
    <dbReference type="NCBI Taxonomy" id="300269"/>
    <lineage>
        <taxon>Bacteria</taxon>
        <taxon>Pseudomonadati</taxon>
        <taxon>Pseudomonadota</taxon>
        <taxon>Gammaproteobacteria</taxon>
        <taxon>Enterobacterales</taxon>
        <taxon>Enterobacteriaceae</taxon>
        <taxon>Shigella</taxon>
    </lineage>
</organism>
<sequence>MMYHIPGVLSPQDVARFREQLEQAEWVDGRVTTGAQGAQVKNNQQVDTRSTLYAALQNEVLNAVNQHALFFAAALPRTLSTPLFNRYQNNETYGFHVDGAVRSHPQNGWMRTDLSATLFLSDPQSYDGGELVVNDTFGQHRVKLPAGDLVLYPSSSQHCVPPVTRGVRVASFMWIQSMIRDDKKRAMLFELDNNIQSLKSRYGESEEILSLLNLYHNLLREWSEI</sequence>
<protein>
    <recommendedName>
        <fullName evidence="1">PKHD-type hydroxylase YbiX</fullName>
        <ecNumber evidence="1">1.14.11.-</ecNumber>
    </recommendedName>
</protein>